<dbReference type="EMBL" id="L08252">
    <property type="protein sequence ID" value="AAA34665.1"/>
    <property type="molecule type" value="Genomic_DNA"/>
</dbReference>
<dbReference type="EMBL" id="X59720">
    <property type="protein sequence ID" value="CAA42280.2"/>
    <property type="molecule type" value="Genomic_DNA"/>
</dbReference>
<dbReference type="EMBL" id="BK006937">
    <property type="protein sequence ID" value="DAA07537.1"/>
    <property type="molecule type" value="Genomic_DNA"/>
</dbReference>
<dbReference type="PIR" id="S22262">
    <property type="entry name" value="S22262"/>
</dbReference>
<dbReference type="RefSeq" id="NP_009991.2">
    <property type="nucleotide sequence ID" value="NM_001178776.1"/>
</dbReference>
<dbReference type="SMR" id="P25364"/>
<dbReference type="BioGRID" id="31041">
    <property type="interactions" value="306"/>
</dbReference>
<dbReference type="DIP" id="DIP-4993N"/>
<dbReference type="FunCoup" id="P25364">
    <property type="interactions" value="567"/>
</dbReference>
<dbReference type="IntAct" id="P25364">
    <property type="interactions" value="6"/>
</dbReference>
<dbReference type="MINT" id="P25364"/>
<dbReference type="STRING" id="4932.YCR065W"/>
<dbReference type="GlyGen" id="P25364">
    <property type="glycosylation" value="1 site"/>
</dbReference>
<dbReference type="iPTMnet" id="P25364"/>
<dbReference type="PaxDb" id="4932-YCR065W"/>
<dbReference type="PeptideAtlas" id="P25364"/>
<dbReference type="EnsemblFungi" id="YCR065W_mRNA">
    <property type="protein sequence ID" value="YCR065W"/>
    <property type="gene ID" value="YCR065W"/>
</dbReference>
<dbReference type="GeneID" id="850429"/>
<dbReference type="KEGG" id="sce:YCR065W"/>
<dbReference type="AGR" id="SGD:S000000661"/>
<dbReference type="SGD" id="S000000661">
    <property type="gene designation" value="HCM1"/>
</dbReference>
<dbReference type="VEuPathDB" id="FungiDB:YCR065W"/>
<dbReference type="eggNOG" id="KOG2294">
    <property type="taxonomic scope" value="Eukaryota"/>
</dbReference>
<dbReference type="HOGENOM" id="CLU_020432_0_0_1"/>
<dbReference type="InParanoid" id="P25364"/>
<dbReference type="OMA" id="DVYSVWK"/>
<dbReference type="OrthoDB" id="5954824at2759"/>
<dbReference type="BioCyc" id="YEAST:G3O-29368-MONOMER"/>
<dbReference type="Reactome" id="R-SCE-3232118">
    <property type="pathway name" value="SUMOylation of transcription factors"/>
</dbReference>
<dbReference type="Reactome" id="R-SCE-9018519">
    <property type="pathway name" value="Estrogen-dependent gene expression"/>
</dbReference>
<dbReference type="BioGRID-ORCS" id="850429">
    <property type="hits" value="2 hits in 13 CRISPR screens"/>
</dbReference>
<dbReference type="PRO" id="PR:P25364"/>
<dbReference type="Proteomes" id="UP000002311">
    <property type="component" value="Chromosome III"/>
</dbReference>
<dbReference type="RNAct" id="P25364">
    <property type="molecule type" value="protein"/>
</dbReference>
<dbReference type="GO" id="GO:0000785">
    <property type="term" value="C:chromatin"/>
    <property type="evidence" value="ECO:0000314"/>
    <property type="project" value="SGD"/>
</dbReference>
<dbReference type="GO" id="GO:0005737">
    <property type="term" value="C:cytoplasm"/>
    <property type="evidence" value="ECO:0000314"/>
    <property type="project" value="SGD"/>
</dbReference>
<dbReference type="GO" id="GO:0005739">
    <property type="term" value="C:mitochondrion"/>
    <property type="evidence" value="ECO:0000314"/>
    <property type="project" value="SGD"/>
</dbReference>
<dbReference type="GO" id="GO:0005634">
    <property type="term" value="C:nucleus"/>
    <property type="evidence" value="ECO:0000314"/>
    <property type="project" value="SGD"/>
</dbReference>
<dbReference type="GO" id="GO:0003700">
    <property type="term" value="F:DNA-binding transcription factor activity"/>
    <property type="evidence" value="ECO:0000314"/>
    <property type="project" value="SGD"/>
</dbReference>
<dbReference type="GO" id="GO:0000981">
    <property type="term" value="F:DNA-binding transcription factor activity, RNA polymerase II-specific"/>
    <property type="evidence" value="ECO:0000318"/>
    <property type="project" value="GO_Central"/>
</dbReference>
<dbReference type="GO" id="GO:0034246">
    <property type="term" value="F:mitochondrial transcription factor activity"/>
    <property type="evidence" value="ECO:0000315"/>
    <property type="project" value="SGD"/>
</dbReference>
<dbReference type="GO" id="GO:0000978">
    <property type="term" value="F:RNA polymerase II cis-regulatory region sequence-specific DNA binding"/>
    <property type="evidence" value="ECO:0000318"/>
    <property type="project" value="GO_Central"/>
</dbReference>
<dbReference type="GO" id="GO:0043565">
    <property type="term" value="F:sequence-specific DNA binding"/>
    <property type="evidence" value="ECO:0007005"/>
    <property type="project" value="SGD"/>
</dbReference>
<dbReference type="GO" id="GO:0034599">
    <property type="term" value="P:cellular response to oxidative stress"/>
    <property type="evidence" value="ECO:0000315"/>
    <property type="project" value="SGD"/>
</dbReference>
<dbReference type="GO" id="GO:0007005">
    <property type="term" value="P:mitochondrion organization"/>
    <property type="evidence" value="ECO:0000315"/>
    <property type="project" value="SGD"/>
</dbReference>
<dbReference type="GO" id="GO:0045944">
    <property type="term" value="P:positive regulation of transcription by RNA polymerase II"/>
    <property type="evidence" value="ECO:0000314"/>
    <property type="project" value="SGD"/>
</dbReference>
<dbReference type="GO" id="GO:1903108">
    <property type="term" value="P:regulation of mitochondrial transcription"/>
    <property type="evidence" value="ECO:0000315"/>
    <property type="project" value="SGD"/>
</dbReference>
<dbReference type="GO" id="GO:0006357">
    <property type="term" value="P:regulation of transcription by RNA polymerase II"/>
    <property type="evidence" value="ECO:0000318"/>
    <property type="project" value="GO_Central"/>
</dbReference>
<dbReference type="GO" id="GO:0051300">
    <property type="term" value="P:spindle pole body organization"/>
    <property type="evidence" value="ECO:0000316"/>
    <property type="project" value="SGD"/>
</dbReference>
<dbReference type="CDD" id="cd00059">
    <property type="entry name" value="FH_FOX"/>
    <property type="match status" value="1"/>
</dbReference>
<dbReference type="FunFam" id="1.10.10.10:FF:000732">
    <property type="entry name" value="Forkhead protein"/>
    <property type="match status" value="1"/>
</dbReference>
<dbReference type="Gene3D" id="1.10.10.10">
    <property type="entry name" value="Winged helix-like DNA-binding domain superfamily/Winged helix DNA-binding domain"/>
    <property type="match status" value="1"/>
</dbReference>
<dbReference type="InterPro" id="IPR001766">
    <property type="entry name" value="Fork_head_dom"/>
</dbReference>
<dbReference type="InterPro" id="IPR050211">
    <property type="entry name" value="FOX_domain-containing"/>
</dbReference>
<dbReference type="InterPro" id="IPR018122">
    <property type="entry name" value="TF_fork_head_CS_1"/>
</dbReference>
<dbReference type="InterPro" id="IPR030456">
    <property type="entry name" value="TF_fork_head_CS_2"/>
</dbReference>
<dbReference type="InterPro" id="IPR036388">
    <property type="entry name" value="WH-like_DNA-bd_sf"/>
</dbReference>
<dbReference type="InterPro" id="IPR036390">
    <property type="entry name" value="WH_DNA-bd_sf"/>
</dbReference>
<dbReference type="PANTHER" id="PTHR11829:SF343">
    <property type="entry name" value="FORK-HEAD DOMAIN-CONTAINING PROTEIN"/>
    <property type="match status" value="1"/>
</dbReference>
<dbReference type="PANTHER" id="PTHR11829">
    <property type="entry name" value="FORKHEAD BOX PROTEIN"/>
    <property type="match status" value="1"/>
</dbReference>
<dbReference type="Pfam" id="PF00250">
    <property type="entry name" value="Forkhead"/>
    <property type="match status" value="1"/>
</dbReference>
<dbReference type="PRINTS" id="PR00053">
    <property type="entry name" value="FORKHEAD"/>
</dbReference>
<dbReference type="SMART" id="SM00339">
    <property type="entry name" value="FH"/>
    <property type="match status" value="1"/>
</dbReference>
<dbReference type="SUPFAM" id="SSF46785">
    <property type="entry name" value="Winged helix' DNA-binding domain"/>
    <property type="match status" value="1"/>
</dbReference>
<dbReference type="PROSITE" id="PS00657">
    <property type="entry name" value="FORK_HEAD_1"/>
    <property type="match status" value="1"/>
</dbReference>
<dbReference type="PROSITE" id="PS00658">
    <property type="entry name" value="FORK_HEAD_2"/>
    <property type="match status" value="1"/>
</dbReference>
<dbReference type="PROSITE" id="PS50039">
    <property type="entry name" value="FORK_HEAD_3"/>
    <property type="match status" value="1"/>
</dbReference>
<proteinExistence type="evidence at protein level"/>
<protein>
    <recommendedName>
        <fullName>Forkhead transcription factor HCM1</fullName>
    </recommendedName>
    <alternativeName>
        <fullName>High-copy suppressor of calmodulin protein 1</fullName>
    </alternativeName>
</protein>
<name>HCM1_YEAST</name>
<feature type="chain" id="PRO_0000091902" description="Forkhead transcription factor HCM1">
    <location>
        <begin position="1"/>
        <end position="564"/>
    </location>
</feature>
<feature type="DNA-binding region" description="Fork-head" evidence="1">
    <location>
        <begin position="108"/>
        <end position="199"/>
    </location>
</feature>
<feature type="region of interest" description="Disordered" evidence="2">
    <location>
        <begin position="33"/>
        <end position="80"/>
    </location>
</feature>
<feature type="region of interest" description="Disordered" evidence="2">
    <location>
        <begin position="224"/>
        <end position="246"/>
    </location>
</feature>
<feature type="region of interest" description="Disordered" evidence="2">
    <location>
        <begin position="401"/>
        <end position="448"/>
    </location>
</feature>
<feature type="region of interest" description="Disordered" evidence="2">
    <location>
        <begin position="536"/>
        <end position="564"/>
    </location>
</feature>
<feature type="compositionally biased region" description="Low complexity" evidence="2">
    <location>
        <begin position="58"/>
        <end position="67"/>
    </location>
</feature>
<feature type="compositionally biased region" description="Acidic residues" evidence="2">
    <location>
        <begin position="224"/>
        <end position="241"/>
    </location>
</feature>
<feature type="compositionally biased region" description="Polar residues" evidence="2">
    <location>
        <begin position="402"/>
        <end position="413"/>
    </location>
</feature>
<feature type="compositionally biased region" description="Basic and acidic residues" evidence="2">
    <location>
        <begin position="432"/>
        <end position="441"/>
    </location>
</feature>
<feature type="compositionally biased region" description="Polar residues" evidence="2">
    <location>
        <begin position="554"/>
        <end position="564"/>
    </location>
</feature>
<feature type="modified residue" description="Phosphothreonine" evidence="7">
    <location>
        <position position="342"/>
    </location>
</feature>
<feature type="modified residue" description="Phosphoserine" evidence="7">
    <location>
        <position position="496"/>
    </location>
</feature>
<feature type="mutagenesis site" description="No recognition of DNA-binding site and no suppression of calmodulin mutants; when associated with A-159; A-162 and A-163." evidence="5">
    <original>N</original>
    <variation>A</variation>
    <location>
        <position position="155"/>
    </location>
</feature>
<feature type="mutagenesis site" description="No recognition of DNA-binding site and no suppression of calmodulin mutants; when associated with A-155; A-162 and A-163." evidence="5">
    <original>H</original>
    <variation>A</variation>
    <location>
        <position position="159"/>
    </location>
</feature>
<feature type="mutagenesis site" description="No recognition of DNA-binding site and no suppression of calmodulin mutants; when associated with A-155; A-159 and A-163." evidence="5">
    <original>S</original>
    <variation>A</variation>
    <location>
        <position position="162"/>
    </location>
</feature>
<feature type="mutagenesis site" description="No recognition of DNA-binding site and no suppression of calmodulin mutants; when associated with A-155; A-159 and A-162." evidence="5">
    <original>L</original>
    <variation>A</variation>
    <location>
        <position position="163"/>
    </location>
</feature>
<feature type="sequence conflict" description="In Ref. 1; AAA34665." evidence="6" ref="1">
    <original>KL</original>
    <variation>NV</variation>
    <location>
        <begin position="129"/>
        <end position="130"/>
    </location>
</feature>
<gene>
    <name type="primary">HCM1</name>
    <name type="ordered locus">YCR065W</name>
    <name type="ORF">YCR65W</name>
    <name type="ORF">YCR902</name>
</gene>
<organism>
    <name type="scientific">Saccharomyces cerevisiae (strain ATCC 204508 / S288c)</name>
    <name type="common">Baker's yeast</name>
    <dbReference type="NCBI Taxonomy" id="559292"/>
    <lineage>
        <taxon>Eukaryota</taxon>
        <taxon>Fungi</taxon>
        <taxon>Dikarya</taxon>
        <taxon>Ascomycota</taxon>
        <taxon>Saccharomycotina</taxon>
        <taxon>Saccharomycetes</taxon>
        <taxon>Saccharomycetales</taxon>
        <taxon>Saccharomycetaceae</taxon>
        <taxon>Saccharomyces</taxon>
    </lineage>
</organism>
<sequence>MMNEDISIIDGHNSFLTEKSTVLLTQAKRTLEDEKEMITPPSSTVRKTMKEVNKRPSHPLSPDHSSPIAPSKAKRQRSDTCARSNGNLTLEEILQSLERRRINGELAKKPPYSYATLICLAILQSQEGKLTLSQIYHWIHVHFPYYKQKDASWQNSIRHNLSLNDAFIKTEKSCDGKGHFWEVRPGAETKFFKGENRGYEFVKDSLQDIGKYFEIDSTLDELEQVESGEGNDDLPDEEEREEAGKFPSIEIQLNSSPILRVSQLHHIPQLKTDNSVLNPHENLESMRNMIENDVNNIDSLEPPYVMKKYHTSLGLPSLVNAKDHFQAGVKNNNITQANRFNTLPITSAKSPQNFRKYFTSFNSNFEDLSPLRSNVGAGSLLDPLPYSPLKLYDQKNLALMSKPQSQQSYSNSQLPPPPSSHGSDLLKTPKMRHSDGLEKTPSRLISTPKDGNSILRKWQTPSHLFEDLYCSPLFRAIETPIRYITTPGGTLETQISPRKSSAPDVLTSATNSKFASSGLFGVDVYSVWKRATEKISDGNNTTDSNQKHHPYHNHPSNDSGNEKN</sequence>
<evidence type="ECO:0000255" key="1">
    <source>
        <dbReference type="PROSITE-ProRule" id="PRU00089"/>
    </source>
</evidence>
<evidence type="ECO:0000256" key="2">
    <source>
        <dbReference type="SAM" id="MobiDB-lite"/>
    </source>
</evidence>
<evidence type="ECO:0000269" key="3">
    <source>
    </source>
</evidence>
<evidence type="ECO:0000269" key="4">
    <source>
    </source>
</evidence>
<evidence type="ECO:0000269" key="5">
    <source>
    </source>
</evidence>
<evidence type="ECO:0000305" key="6"/>
<evidence type="ECO:0007744" key="7">
    <source>
    </source>
</evidence>
<keyword id="KW-0963">Cytoplasm</keyword>
<keyword id="KW-0238">DNA-binding</keyword>
<keyword id="KW-0539">Nucleus</keyword>
<keyword id="KW-0597">Phosphoprotein</keyword>
<keyword id="KW-1185">Reference proteome</keyword>
<keyword id="KW-0804">Transcription</keyword>
<keyword id="KW-0805">Transcription regulation</keyword>
<reference key="1">
    <citation type="journal article" date="1993" name="Mol. Cell. Biol.">
        <title>A dosage-dependent suppressor of a temperature-sensitive calmodulin mutant encodes a protein related to the fork head family of DNA-binding proteins.</title>
        <authorList>
            <person name="Zhu G."/>
            <person name="Muller E.G.D."/>
            <person name="Amacher S.L."/>
            <person name="Northrop J.L."/>
            <person name="Davis T.N."/>
        </authorList>
    </citation>
    <scope>NUCLEOTIDE SEQUENCE [GENOMIC DNA]</scope>
</reference>
<reference key="2">
    <citation type="journal article" date="1992" name="Yeast">
        <title>Sequence of the sup61-RAD18 region on chromosome III of Saccharomyces cerevisiae.</title>
        <authorList>
            <person name="Benit P."/>
            <person name="Chanet R."/>
            <person name="Fabre F."/>
            <person name="Faye G."/>
            <person name="Fukuhara H."/>
            <person name="Sor F."/>
        </authorList>
    </citation>
    <scope>NUCLEOTIDE SEQUENCE [GENOMIC DNA]</scope>
</reference>
<reference key="3">
    <citation type="journal article" date="1992" name="Nature">
        <title>The complete DNA sequence of yeast chromosome III.</title>
        <authorList>
            <person name="Oliver S.G."/>
            <person name="van der Aart Q.J.M."/>
            <person name="Agostoni-Carbone M.L."/>
            <person name="Aigle M."/>
            <person name="Alberghina L."/>
            <person name="Alexandraki D."/>
            <person name="Antoine G."/>
            <person name="Anwar R."/>
            <person name="Ballesta J.P.G."/>
            <person name="Benit P."/>
            <person name="Berben G."/>
            <person name="Bergantino E."/>
            <person name="Biteau N."/>
            <person name="Bolle P.-A."/>
            <person name="Bolotin-Fukuhara M."/>
            <person name="Brown A."/>
            <person name="Brown A.J.P."/>
            <person name="Buhler J.-M."/>
            <person name="Carcano C."/>
            <person name="Carignani G."/>
            <person name="Cederberg H."/>
            <person name="Chanet R."/>
            <person name="Contreras R."/>
            <person name="Crouzet M."/>
            <person name="Daignan-Fornier B."/>
            <person name="Defoor E."/>
            <person name="Delgado M.D."/>
            <person name="Demolder J."/>
            <person name="Doira C."/>
            <person name="Dubois E."/>
            <person name="Dujon B."/>
            <person name="Duesterhoeft A."/>
            <person name="Erdmann D."/>
            <person name="Esteban M."/>
            <person name="Fabre F."/>
            <person name="Fairhead C."/>
            <person name="Faye G."/>
            <person name="Feldmann H."/>
            <person name="Fiers W."/>
            <person name="Francingues-Gaillard M.-C."/>
            <person name="Franco L."/>
            <person name="Frontali L."/>
            <person name="Fukuhara H."/>
            <person name="Fuller L.J."/>
            <person name="Galland P."/>
            <person name="Gent M.E."/>
            <person name="Gigot D."/>
            <person name="Gilliquet V."/>
            <person name="Glansdorff N."/>
            <person name="Goffeau A."/>
            <person name="Grenson M."/>
            <person name="Grisanti P."/>
            <person name="Grivell L.A."/>
            <person name="de Haan M."/>
            <person name="Haasemann M."/>
            <person name="Hatat D."/>
            <person name="Hoenicka J."/>
            <person name="Hegemann J.H."/>
            <person name="Herbert C.J."/>
            <person name="Hilger F."/>
            <person name="Hohmann S."/>
            <person name="Hollenberg C.P."/>
            <person name="Huse K."/>
            <person name="Iborra F."/>
            <person name="Indge K.J."/>
            <person name="Isono K."/>
            <person name="Jacq C."/>
            <person name="Jacquet M."/>
            <person name="James C.M."/>
            <person name="Jauniaux J.-C."/>
            <person name="Jia Y."/>
            <person name="Jimenez A."/>
            <person name="Kelly A."/>
            <person name="Kleinhans U."/>
            <person name="Kreisl P."/>
            <person name="Lanfranchi G."/>
            <person name="Lewis C."/>
            <person name="van der Linden C.G."/>
            <person name="Lucchini G."/>
            <person name="Lutzenkirchen K."/>
            <person name="Maat M.J."/>
            <person name="Mallet L."/>
            <person name="Mannhaupt G."/>
            <person name="Martegani E."/>
            <person name="Mathieu A."/>
            <person name="Maurer C.T.C."/>
            <person name="McConnell D."/>
            <person name="McKee R.A."/>
            <person name="Messenguy F."/>
            <person name="Mewes H.-W."/>
            <person name="Molemans F."/>
            <person name="Montague M.A."/>
            <person name="Muzi Falconi M."/>
            <person name="Navas L."/>
            <person name="Newlon C.S."/>
            <person name="Noone D."/>
            <person name="Pallier C."/>
            <person name="Panzeri L."/>
            <person name="Pearson B.M."/>
            <person name="Perea J."/>
            <person name="Philippsen P."/>
            <person name="Pierard A."/>
            <person name="Planta R.J."/>
            <person name="Plevani P."/>
            <person name="Poetsch B."/>
            <person name="Pohl F.M."/>
            <person name="Purnelle B."/>
            <person name="Ramezani Rad M."/>
            <person name="Rasmussen S.W."/>
            <person name="Raynal A."/>
            <person name="Remacha M.A."/>
            <person name="Richterich P."/>
            <person name="Roberts A.B."/>
            <person name="Rodriguez F."/>
            <person name="Sanz E."/>
            <person name="Schaaff-Gerstenschlaeger I."/>
            <person name="Scherens B."/>
            <person name="Schweitzer B."/>
            <person name="Shu Y."/>
            <person name="Skala J."/>
            <person name="Slonimski P.P."/>
            <person name="Sor F."/>
            <person name="Soustelle C."/>
            <person name="Spiegelberg R."/>
            <person name="Stateva L.I."/>
            <person name="Steensma H.Y."/>
            <person name="Steiner S."/>
            <person name="Thierry A."/>
            <person name="Thireos G."/>
            <person name="Tzermia M."/>
            <person name="Urrestarazu L.A."/>
            <person name="Valle G."/>
            <person name="Vetter I."/>
            <person name="van Vliet-Reedijk J.C."/>
            <person name="Voet M."/>
            <person name="Volckaert G."/>
            <person name="Vreken P."/>
            <person name="Wang H."/>
            <person name="Warmington J.R."/>
            <person name="von Wettstein D."/>
            <person name="Wicksteed B.L."/>
            <person name="Wilson C."/>
            <person name="Wurst H."/>
            <person name="Xu G."/>
            <person name="Yoshikawa A."/>
            <person name="Zimmermann F.K."/>
            <person name="Sgouros J.G."/>
        </authorList>
    </citation>
    <scope>NUCLEOTIDE SEQUENCE [LARGE SCALE GENOMIC DNA]</scope>
    <source>
        <strain>ATCC 204508 / S288c</strain>
    </source>
</reference>
<reference key="4">
    <citation type="submission" date="2001-06" db="EMBL/GenBank/DDBJ databases">
        <authorList>
            <person name="Valles G."/>
            <person name="Volckaerts G."/>
        </authorList>
    </citation>
    <scope>SEQUENCE REVISION TO C-TERMINUS</scope>
</reference>
<reference key="5">
    <citation type="journal article" date="2014" name="G3 (Bethesda)">
        <title>The reference genome sequence of Saccharomyces cerevisiae: Then and now.</title>
        <authorList>
            <person name="Engel S.R."/>
            <person name="Dietrich F.S."/>
            <person name="Fisk D.G."/>
            <person name="Binkley G."/>
            <person name="Balakrishnan R."/>
            <person name="Costanzo M.C."/>
            <person name="Dwight S.S."/>
            <person name="Hitz B.C."/>
            <person name="Karra K."/>
            <person name="Nash R.S."/>
            <person name="Weng S."/>
            <person name="Wong E.D."/>
            <person name="Lloyd P."/>
            <person name="Skrzypek M.S."/>
            <person name="Miyasato S.R."/>
            <person name="Simison M."/>
            <person name="Cherry J.M."/>
        </authorList>
    </citation>
    <scope>GENOME REANNOTATION</scope>
    <source>
        <strain>ATCC 204508 / S288c</strain>
    </source>
</reference>
<reference key="6">
    <citation type="journal article" date="1998" name="Biochim. Biophys. Acta">
        <title>The fork head transcription factor Hcm1p participates in the regulation of SPC110, which encodes the calmodulin-binding protein in the yeast spindle pole body.</title>
        <authorList>
            <person name="Zhu G."/>
            <person name="Davis T.N."/>
        </authorList>
    </citation>
    <scope>FUNCTION</scope>
    <scope>SUBCELLULAR LOCATION</scope>
    <scope>MUTAGENESIS OF ASN-155; HIS-159; SER-162 AND LEU-163</scope>
    <scope>RECOGNITION OF DNA-BINDING SITE</scope>
</reference>
<reference key="7">
    <citation type="journal article" date="2003" name="Nature">
        <title>Global analysis of protein localization in budding yeast.</title>
        <authorList>
            <person name="Huh W.-K."/>
            <person name="Falvo J.V."/>
            <person name="Gerke L.C."/>
            <person name="Carroll A.S."/>
            <person name="Howson R.W."/>
            <person name="Weissman J.S."/>
            <person name="O'Shea E.K."/>
        </authorList>
    </citation>
    <scope>SUBCELLULAR LOCATION [LARGE SCALE ANALYSIS]</scope>
</reference>
<reference key="8">
    <citation type="journal article" date="2003" name="Nature">
        <title>Global analysis of protein expression in yeast.</title>
        <authorList>
            <person name="Ghaemmaghami S."/>
            <person name="Huh W.-K."/>
            <person name="Bower K."/>
            <person name="Howson R.W."/>
            <person name="Belle A."/>
            <person name="Dephoure N."/>
            <person name="O'Shea E.K."/>
            <person name="Weissman J.S."/>
        </authorList>
    </citation>
    <scope>LEVEL OF PROTEIN EXPRESSION [LARGE SCALE ANALYSIS]</scope>
</reference>
<reference key="9">
    <citation type="journal article" date="2003" name="Nature">
        <title>Targets of the cyclin-dependent kinase Cdk1.</title>
        <authorList>
            <person name="Ubersax J.A."/>
            <person name="Woodbury E.L."/>
            <person name="Quang P.N."/>
            <person name="Paraz M."/>
            <person name="Blethrow J.D."/>
            <person name="Shah K."/>
            <person name="Shokat K.M."/>
            <person name="Morgan D.O."/>
        </authorList>
    </citation>
    <scope>PHOSPHORYLATION BY CDK1</scope>
</reference>
<reference key="10">
    <citation type="journal article" date="2008" name="Mol. Cell. Proteomics">
        <title>A multidimensional chromatography technology for in-depth phosphoproteome analysis.</title>
        <authorList>
            <person name="Albuquerque C.P."/>
            <person name="Smolka M.B."/>
            <person name="Payne S.H."/>
            <person name="Bafna V."/>
            <person name="Eng J."/>
            <person name="Zhou H."/>
        </authorList>
    </citation>
    <scope>PHOSPHORYLATION [LARGE SCALE ANALYSIS] AT THR-342 AND SER-496</scope>
    <scope>IDENTIFICATION BY MASS SPECTROMETRY [LARGE SCALE ANALYSIS]</scope>
</reference>
<accession>P25364</accession>
<accession>D6VR68</accession>
<comment type="function">
    <text evidence="5">Transcription factor regulating the cell cycle specific transcription of a spindle pole body (SPB) calmodulin binding protein SPC110. Required for full induction of SPC110 transcription in late G1. Binds to DNA consensus sequence 5'-[AT]AA[TC]AAACAA[AT]-3'. Dosage dependent suppressor of calmodulin mutants which have specific defects in SPB assembly.</text>
</comment>
<comment type="subcellular location">
    <subcellularLocation>
        <location>Cytoplasm</location>
    </subcellularLocation>
    <subcellularLocation>
        <location>Nucleus</location>
    </subcellularLocation>
</comment>
<comment type="PTM">
    <text evidence="4">Phosphorylated by CDK1.</text>
</comment>
<comment type="miscellaneous">
    <text evidence="3">Present with 358 molecules/cell in log phase SD medium.</text>
</comment>